<proteinExistence type="inferred from homology"/>
<name>DSBD_PSEA6</name>
<protein>
    <recommendedName>
        <fullName evidence="1">Thiol:disulfide interchange protein DsbD</fullName>
        <ecNumber evidence="1">1.8.1.8</ecNumber>
    </recommendedName>
    <alternativeName>
        <fullName evidence="1">Protein-disulfide reductase</fullName>
        <shortName evidence="1">Disulfide reductase</shortName>
    </alternativeName>
</protein>
<sequence length="592" mass="64665">MKLIASFSIFMLMSIWSFASLGQSNSFDSLFSNEPEFLKVDQAFVFDYVQNGDQLVVTWDIADDYYLYQQQFKAVSKNASLGEPIFPTGKMKEDEFFDEPQEVYYHKVSVTYPILQSQDDSAVKIRYQGCAEAGLCYPPTTQVVYLNAVNASDDLSNTDEASVESSGSVSQQFELADLLTGDQSLIWVLLIFLALGVGLAFTPCVFPMYPILSGIVIGQGKSISTSRAFVLSFVYVQGMALTYSLLGLVVASAGVQFQAALQHPIILGALIVVFALLALVMFGAWEFQLPSSWQEKLNGVSNQQKSGSYLGVLLMGAISGLVASPCTTAPLTGILLYIAQTSDLLLGFSALYALSLGMGIPLILFGITGGKLLPKAGAWMNIIKVTFGFMMLAVALMFVERLVSHMATDILWSLLGLVTFSYFYVMNQASSVTFGKGVRALVIFIGLFASAMYGYQTIFGQTSSVAGHTEQSHPRFEVVKNLDDFEQKLAAANAQGKTVMVDLYADWCVACKEFEKYTFPDTQVVDALSNTVWMQIDLTDNTATNIAFQEHFSILGLPTILFFDLQGKEISGSRVTGFMQASAFAAHAKNIL</sequence>
<comment type="function">
    <text evidence="1">Required to facilitate the formation of correct disulfide bonds in some periplasmic proteins and for the assembly of the periplasmic c-type cytochromes. Acts by transferring electrons from cytoplasmic thioredoxin to the periplasm. This transfer involves a cascade of disulfide bond formation and reduction steps.</text>
</comment>
<comment type="catalytic activity">
    <reaction evidence="1">
        <text>[protein]-dithiol + NAD(+) = [protein]-disulfide + NADH + H(+)</text>
        <dbReference type="Rhea" id="RHEA:18749"/>
        <dbReference type="Rhea" id="RHEA-COMP:10593"/>
        <dbReference type="Rhea" id="RHEA-COMP:10594"/>
        <dbReference type="ChEBI" id="CHEBI:15378"/>
        <dbReference type="ChEBI" id="CHEBI:29950"/>
        <dbReference type="ChEBI" id="CHEBI:50058"/>
        <dbReference type="ChEBI" id="CHEBI:57540"/>
        <dbReference type="ChEBI" id="CHEBI:57945"/>
        <dbReference type="EC" id="1.8.1.8"/>
    </reaction>
</comment>
<comment type="catalytic activity">
    <reaction evidence="1">
        <text>[protein]-dithiol + NADP(+) = [protein]-disulfide + NADPH + H(+)</text>
        <dbReference type="Rhea" id="RHEA:18753"/>
        <dbReference type="Rhea" id="RHEA-COMP:10593"/>
        <dbReference type="Rhea" id="RHEA-COMP:10594"/>
        <dbReference type="ChEBI" id="CHEBI:15378"/>
        <dbReference type="ChEBI" id="CHEBI:29950"/>
        <dbReference type="ChEBI" id="CHEBI:50058"/>
        <dbReference type="ChEBI" id="CHEBI:57783"/>
        <dbReference type="ChEBI" id="CHEBI:58349"/>
        <dbReference type="EC" id="1.8.1.8"/>
    </reaction>
</comment>
<comment type="subcellular location">
    <subcellularLocation>
        <location evidence="1">Cell inner membrane</location>
        <topology evidence="1">Multi-pass membrane protein</topology>
    </subcellularLocation>
</comment>
<comment type="similarity">
    <text evidence="1">Belongs to the thioredoxin family. DsbD subfamily.</text>
</comment>
<feature type="signal peptide" evidence="1">
    <location>
        <begin position="1"/>
        <end position="19"/>
    </location>
</feature>
<feature type="chain" id="PRO_0000304392" description="Thiol:disulfide interchange protein DsbD">
    <location>
        <begin position="20"/>
        <end position="592"/>
    </location>
</feature>
<feature type="transmembrane region" description="Helical" evidence="1">
    <location>
        <begin position="186"/>
        <end position="206"/>
    </location>
</feature>
<feature type="transmembrane region" description="Helical" evidence="1">
    <location>
        <begin position="229"/>
        <end position="249"/>
    </location>
</feature>
<feature type="transmembrane region" description="Helical" evidence="1">
    <location>
        <begin position="265"/>
        <end position="285"/>
    </location>
</feature>
<feature type="transmembrane region" description="Helical" evidence="1">
    <location>
        <begin position="318"/>
        <end position="338"/>
    </location>
</feature>
<feature type="transmembrane region" description="Helical" evidence="1">
    <location>
        <begin position="345"/>
        <end position="365"/>
    </location>
</feature>
<feature type="transmembrane region" description="Helical" evidence="1">
    <location>
        <begin position="379"/>
        <end position="399"/>
    </location>
</feature>
<feature type="transmembrane region" description="Helical" evidence="1">
    <location>
        <begin position="406"/>
        <end position="426"/>
    </location>
</feature>
<feature type="transmembrane region" description="Helical" evidence="1">
    <location>
        <begin position="440"/>
        <end position="460"/>
    </location>
</feature>
<feature type="domain" description="Thioredoxin" evidence="1">
    <location>
        <begin position="443"/>
        <end position="592"/>
    </location>
</feature>
<feature type="disulfide bond" description="Redox-active" evidence="1">
    <location>
        <begin position="130"/>
        <end position="136"/>
    </location>
</feature>
<feature type="disulfide bond" description="Redox-active" evidence="1">
    <location>
        <begin position="204"/>
        <end position="326"/>
    </location>
</feature>
<feature type="disulfide bond" description="Redox-active" evidence="1">
    <location>
        <begin position="508"/>
        <end position="511"/>
    </location>
</feature>
<organism>
    <name type="scientific">Pseudoalteromonas atlantica (strain T6c / ATCC BAA-1087)</name>
    <dbReference type="NCBI Taxonomy" id="3042615"/>
    <lineage>
        <taxon>Bacteria</taxon>
        <taxon>Pseudomonadati</taxon>
        <taxon>Pseudomonadota</taxon>
        <taxon>Gammaproteobacteria</taxon>
        <taxon>Alteromonadales</taxon>
        <taxon>Alteromonadaceae</taxon>
        <taxon>Paraglaciecola</taxon>
    </lineage>
</organism>
<keyword id="KW-0997">Cell inner membrane</keyword>
<keyword id="KW-1003">Cell membrane</keyword>
<keyword id="KW-0201">Cytochrome c-type biogenesis</keyword>
<keyword id="KW-1015">Disulfide bond</keyword>
<keyword id="KW-0249">Electron transport</keyword>
<keyword id="KW-0472">Membrane</keyword>
<keyword id="KW-0520">NAD</keyword>
<keyword id="KW-0560">Oxidoreductase</keyword>
<keyword id="KW-0676">Redox-active center</keyword>
<keyword id="KW-0732">Signal</keyword>
<keyword id="KW-0812">Transmembrane</keyword>
<keyword id="KW-1133">Transmembrane helix</keyword>
<keyword id="KW-0813">Transport</keyword>
<accession>Q15ZS2</accession>
<dbReference type="EC" id="1.8.1.8" evidence="1"/>
<dbReference type="EMBL" id="CP000388">
    <property type="protein sequence ID" value="ABG38616.1"/>
    <property type="molecule type" value="Genomic_DNA"/>
</dbReference>
<dbReference type="RefSeq" id="WP_011573025.1">
    <property type="nucleotide sequence ID" value="NC_008228.1"/>
</dbReference>
<dbReference type="SMR" id="Q15ZS2"/>
<dbReference type="STRING" id="342610.Patl_0084"/>
<dbReference type="KEGG" id="pat:Patl_0084"/>
<dbReference type="eggNOG" id="COG4232">
    <property type="taxonomic scope" value="Bacteria"/>
</dbReference>
<dbReference type="HOGENOM" id="CLU_014657_3_0_6"/>
<dbReference type="OrthoDB" id="9811036at2"/>
<dbReference type="Proteomes" id="UP000001981">
    <property type="component" value="Chromosome"/>
</dbReference>
<dbReference type="GO" id="GO:0005886">
    <property type="term" value="C:plasma membrane"/>
    <property type="evidence" value="ECO:0007669"/>
    <property type="project" value="UniProtKB-SubCell"/>
</dbReference>
<dbReference type="GO" id="GO:0009055">
    <property type="term" value="F:electron transfer activity"/>
    <property type="evidence" value="ECO:0007669"/>
    <property type="project" value="UniProtKB-UniRule"/>
</dbReference>
<dbReference type="GO" id="GO:0047134">
    <property type="term" value="F:protein-disulfide reductase [NAD(P)H] activity"/>
    <property type="evidence" value="ECO:0007669"/>
    <property type="project" value="UniProtKB-UniRule"/>
</dbReference>
<dbReference type="GO" id="GO:0045454">
    <property type="term" value="P:cell redox homeostasis"/>
    <property type="evidence" value="ECO:0007669"/>
    <property type="project" value="TreeGrafter"/>
</dbReference>
<dbReference type="GO" id="GO:0017004">
    <property type="term" value="P:cytochrome complex assembly"/>
    <property type="evidence" value="ECO:0007669"/>
    <property type="project" value="UniProtKB-UniRule"/>
</dbReference>
<dbReference type="CDD" id="cd02953">
    <property type="entry name" value="DsbDgamma"/>
    <property type="match status" value="1"/>
</dbReference>
<dbReference type="Gene3D" id="3.40.30.10">
    <property type="entry name" value="Glutaredoxin"/>
    <property type="match status" value="1"/>
</dbReference>
<dbReference type="Gene3D" id="2.60.40.1250">
    <property type="entry name" value="Thiol:disulfide interchange protein DsbD, N-terminal domain"/>
    <property type="match status" value="1"/>
</dbReference>
<dbReference type="HAMAP" id="MF_00399">
    <property type="entry name" value="DbsD"/>
    <property type="match status" value="1"/>
</dbReference>
<dbReference type="InterPro" id="IPR003834">
    <property type="entry name" value="Cyt_c_assmbl_TM_dom"/>
</dbReference>
<dbReference type="InterPro" id="IPR035671">
    <property type="entry name" value="DsbD_gamma"/>
</dbReference>
<dbReference type="InterPro" id="IPR028250">
    <property type="entry name" value="DsbDN"/>
</dbReference>
<dbReference type="InterPro" id="IPR036929">
    <property type="entry name" value="DsbDN_sf"/>
</dbReference>
<dbReference type="InterPro" id="IPR022910">
    <property type="entry name" value="Thiol_diS_interchange_DbsD"/>
</dbReference>
<dbReference type="InterPro" id="IPR036249">
    <property type="entry name" value="Thioredoxin-like_sf"/>
</dbReference>
<dbReference type="InterPro" id="IPR017937">
    <property type="entry name" value="Thioredoxin_CS"/>
</dbReference>
<dbReference type="InterPro" id="IPR013766">
    <property type="entry name" value="Thioredoxin_domain"/>
</dbReference>
<dbReference type="NCBIfam" id="NF001419">
    <property type="entry name" value="PRK00293.1"/>
    <property type="match status" value="1"/>
</dbReference>
<dbReference type="PANTHER" id="PTHR32234">
    <property type="entry name" value="THIOL:DISULFIDE INTERCHANGE PROTEIN DSBD"/>
    <property type="match status" value="1"/>
</dbReference>
<dbReference type="PANTHER" id="PTHR32234:SF0">
    <property type="entry name" value="THIOL:DISULFIDE INTERCHANGE PROTEIN DSBD"/>
    <property type="match status" value="1"/>
</dbReference>
<dbReference type="Pfam" id="PF11412">
    <property type="entry name" value="DsbD_N"/>
    <property type="match status" value="1"/>
</dbReference>
<dbReference type="Pfam" id="PF02683">
    <property type="entry name" value="DsbD_TM"/>
    <property type="match status" value="1"/>
</dbReference>
<dbReference type="Pfam" id="PF13899">
    <property type="entry name" value="Thioredoxin_7"/>
    <property type="match status" value="1"/>
</dbReference>
<dbReference type="SUPFAM" id="SSF74863">
    <property type="entry name" value="Thiol:disulfide interchange protein DsbD, N-terminal domain (DsbD-alpha)"/>
    <property type="match status" value="1"/>
</dbReference>
<dbReference type="SUPFAM" id="SSF52833">
    <property type="entry name" value="Thioredoxin-like"/>
    <property type="match status" value="1"/>
</dbReference>
<dbReference type="PROSITE" id="PS00194">
    <property type="entry name" value="THIOREDOXIN_1"/>
    <property type="match status" value="1"/>
</dbReference>
<dbReference type="PROSITE" id="PS51352">
    <property type="entry name" value="THIOREDOXIN_2"/>
    <property type="match status" value="1"/>
</dbReference>
<reference key="1">
    <citation type="submission" date="2006-06" db="EMBL/GenBank/DDBJ databases">
        <title>Complete sequence of Pseudoalteromonas atlantica T6c.</title>
        <authorList>
            <consortium name="US DOE Joint Genome Institute"/>
            <person name="Copeland A."/>
            <person name="Lucas S."/>
            <person name="Lapidus A."/>
            <person name="Barry K."/>
            <person name="Detter J.C."/>
            <person name="Glavina del Rio T."/>
            <person name="Hammon N."/>
            <person name="Israni S."/>
            <person name="Dalin E."/>
            <person name="Tice H."/>
            <person name="Pitluck S."/>
            <person name="Saunders E."/>
            <person name="Brettin T."/>
            <person name="Bruce D."/>
            <person name="Han C."/>
            <person name="Tapia R."/>
            <person name="Gilna P."/>
            <person name="Schmutz J."/>
            <person name="Larimer F."/>
            <person name="Land M."/>
            <person name="Hauser L."/>
            <person name="Kyrpides N."/>
            <person name="Kim E."/>
            <person name="Karls A.C."/>
            <person name="Bartlett D."/>
            <person name="Higgins B.P."/>
            <person name="Richardson P."/>
        </authorList>
    </citation>
    <scope>NUCLEOTIDE SEQUENCE [LARGE SCALE GENOMIC DNA]</scope>
    <source>
        <strain>T6c / ATCC BAA-1087</strain>
    </source>
</reference>
<evidence type="ECO:0000255" key="1">
    <source>
        <dbReference type="HAMAP-Rule" id="MF_00399"/>
    </source>
</evidence>
<gene>
    <name evidence="1" type="primary">dsbD</name>
    <name type="ordered locus">Patl_0084</name>
</gene>